<gene>
    <name evidence="1" type="primary">prmA</name>
    <name type="ordered locus">BA_4537</name>
    <name type="ordered locus">GBAA_4537</name>
    <name type="ordered locus">BAS4211</name>
</gene>
<accession>Q81LS4</accession>
<accession>Q6HT79</accession>
<accession>Q6KMG9</accession>
<keyword id="KW-0963">Cytoplasm</keyword>
<keyword id="KW-0489">Methyltransferase</keyword>
<keyword id="KW-1185">Reference proteome</keyword>
<keyword id="KW-0949">S-adenosyl-L-methionine</keyword>
<keyword id="KW-0808">Transferase</keyword>
<sequence length="312" mass="33715">MKWSEISIHTTEEAVEAVSHILHEAGASGVAIEDPAELTKEREQQYGEIYALNPDEYPAEGVLIKAYFPQTDSLHETIAGVKSSIDVLPSYDIEIGTGNITVNEVNEEDWATAWKKYYHPVQISDTFTIVPTWEEYTPSSPEEKIIELDPGMAFGTGTHPTTTMCIRALEKTVQPGDTIIDVGTGSGVLSIAAAKLGASSVQAYDLDPVAVESAEMNVRLNKTDDVVSVGQNSLLEGIEGPVDLIVANLLAEIILLFPEDAARVVKSGGLFITSGIIAAKEKVISEALEKAGFTIEEVLRMEDWVAIIARNA</sequence>
<feature type="chain" id="PRO_0000192231" description="Ribosomal protein L11 methyltransferase">
    <location>
        <begin position="1"/>
        <end position="312"/>
    </location>
</feature>
<feature type="binding site" evidence="1">
    <location>
        <position position="162"/>
    </location>
    <ligand>
        <name>S-adenosyl-L-methionine</name>
        <dbReference type="ChEBI" id="CHEBI:59789"/>
    </ligand>
</feature>
<feature type="binding site" evidence="1">
    <location>
        <position position="183"/>
    </location>
    <ligand>
        <name>S-adenosyl-L-methionine</name>
        <dbReference type="ChEBI" id="CHEBI:59789"/>
    </ligand>
</feature>
<feature type="binding site" evidence="1">
    <location>
        <position position="205"/>
    </location>
    <ligand>
        <name>S-adenosyl-L-methionine</name>
        <dbReference type="ChEBI" id="CHEBI:59789"/>
    </ligand>
</feature>
<feature type="binding site" evidence="1">
    <location>
        <position position="248"/>
    </location>
    <ligand>
        <name>S-adenosyl-L-methionine</name>
        <dbReference type="ChEBI" id="CHEBI:59789"/>
    </ligand>
</feature>
<organism>
    <name type="scientific">Bacillus anthracis</name>
    <dbReference type="NCBI Taxonomy" id="1392"/>
    <lineage>
        <taxon>Bacteria</taxon>
        <taxon>Bacillati</taxon>
        <taxon>Bacillota</taxon>
        <taxon>Bacilli</taxon>
        <taxon>Bacillales</taxon>
        <taxon>Bacillaceae</taxon>
        <taxon>Bacillus</taxon>
        <taxon>Bacillus cereus group</taxon>
    </lineage>
</organism>
<protein>
    <recommendedName>
        <fullName evidence="1">Ribosomal protein L11 methyltransferase</fullName>
        <shortName evidence="1">L11 Mtase</shortName>
        <ecNumber evidence="1">2.1.1.-</ecNumber>
    </recommendedName>
</protein>
<comment type="function">
    <text evidence="1">Methylates ribosomal protein L11.</text>
</comment>
<comment type="catalytic activity">
    <reaction evidence="1">
        <text>L-lysyl-[protein] + 3 S-adenosyl-L-methionine = N(6),N(6),N(6)-trimethyl-L-lysyl-[protein] + 3 S-adenosyl-L-homocysteine + 3 H(+)</text>
        <dbReference type="Rhea" id="RHEA:54192"/>
        <dbReference type="Rhea" id="RHEA-COMP:9752"/>
        <dbReference type="Rhea" id="RHEA-COMP:13826"/>
        <dbReference type="ChEBI" id="CHEBI:15378"/>
        <dbReference type="ChEBI" id="CHEBI:29969"/>
        <dbReference type="ChEBI" id="CHEBI:57856"/>
        <dbReference type="ChEBI" id="CHEBI:59789"/>
        <dbReference type="ChEBI" id="CHEBI:61961"/>
    </reaction>
</comment>
<comment type="subcellular location">
    <subcellularLocation>
        <location evidence="1">Cytoplasm</location>
    </subcellularLocation>
</comment>
<comment type="similarity">
    <text evidence="1">Belongs to the methyltransferase superfamily. PrmA family.</text>
</comment>
<dbReference type="EC" id="2.1.1.-" evidence="1"/>
<dbReference type="EMBL" id="AE016879">
    <property type="protein sequence ID" value="AAP28246.1"/>
    <property type="molecule type" value="Genomic_DNA"/>
</dbReference>
<dbReference type="EMBL" id="AE017334">
    <property type="protein sequence ID" value="AAT33658.1"/>
    <property type="molecule type" value="Genomic_DNA"/>
</dbReference>
<dbReference type="EMBL" id="AE017225">
    <property type="protein sequence ID" value="AAT56510.1"/>
    <property type="molecule type" value="Genomic_DNA"/>
</dbReference>
<dbReference type="RefSeq" id="NP_846760.1">
    <property type="nucleotide sequence ID" value="NC_003997.3"/>
</dbReference>
<dbReference type="RefSeq" id="WP_000872105.1">
    <property type="nucleotide sequence ID" value="NZ_WXXJ01000027.1"/>
</dbReference>
<dbReference type="RefSeq" id="YP_030459.1">
    <property type="nucleotide sequence ID" value="NC_005945.1"/>
</dbReference>
<dbReference type="SMR" id="Q81LS4"/>
<dbReference type="STRING" id="261594.GBAA_4537"/>
<dbReference type="DNASU" id="1088267"/>
<dbReference type="GeneID" id="45024189"/>
<dbReference type="KEGG" id="ban:BA_4537"/>
<dbReference type="KEGG" id="bar:GBAA_4537"/>
<dbReference type="KEGG" id="bat:BAS4211"/>
<dbReference type="PATRIC" id="fig|198094.11.peg.4505"/>
<dbReference type="eggNOG" id="COG2264">
    <property type="taxonomic scope" value="Bacteria"/>
</dbReference>
<dbReference type="HOGENOM" id="CLU_049382_0_1_9"/>
<dbReference type="OMA" id="MYYEFFF"/>
<dbReference type="OrthoDB" id="9785995at2"/>
<dbReference type="Proteomes" id="UP000000427">
    <property type="component" value="Chromosome"/>
</dbReference>
<dbReference type="Proteomes" id="UP000000594">
    <property type="component" value="Chromosome"/>
</dbReference>
<dbReference type="GO" id="GO:0005737">
    <property type="term" value="C:cytoplasm"/>
    <property type="evidence" value="ECO:0007669"/>
    <property type="project" value="UniProtKB-SubCell"/>
</dbReference>
<dbReference type="GO" id="GO:0016279">
    <property type="term" value="F:protein-lysine N-methyltransferase activity"/>
    <property type="evidence" value="ECO:0007669"/>
    <property type="project" value="RHEA"/>
</dbReference>
<dbReference type="GO" id="GO:0032259">
    <property type="term" value="P:methylation"/>
    <property type="evidence" value="ECO:0007669"/>
    <property type="project" value="UniProtKB-KW"/>
</dbReference>
<dbReference type="CDD" id="cd02440">
    <property type="entry name" value="AdoMet_MTases"/>
    <property type="match status" value="1"/>
</dbReference>
<dbReference type="Gene3D" id="3.40.50.150">
    <property type="entry name" value="Vaccinia Virus protein VP39"/>
    <property type="match status" value="1"/>
</dbReference>
<dbReference type="HAMAP" id="MF_00735">
    <property type="entry name" value="Methyltr_PrmA"/>
    <property type="match status" value="1"/>
</dbReference>
<dbReference type="InterPro" id="IPR050078">
    <property type="entry name" value="Ribosomal_L11_MeTrfase_PrmA"/>
</dbReference>
<dbReference type="InterPro" id="IPR004498">
    <property type="entry name" value="Ribosomal_PrmA_MeTrfase"/>
</dbReference>
<dbReference type="InterPro" id="IPR029063">
    <property type="entry name" value="SAM-dependent_MTases_sf"/>
</dbReference>
<dbReference type="NCBIfam" id="TIGR00406">
    <property type="entry name" value="prmA"/>
    <property type="match status" value="1"/>
</dbReference>
<dbReference type="PANTHER" id="PTHR43648">
    <property type="entry name" value="ELECTRON TRANSFER FLAVOPROTEIN BETA SUBUNIT LYSINE METHYLTRANSFERASE"/>
    <property type="match status" value="1"/>
</dbReference>
<dbReference type="PANTHER" id="PTHR43648:SF1">
    <property type="entry name" value="ELECTRON TRANSFER FLAVOPROTEIN BETA SUBUNIT LYSINE METHYLTRANSFERASE"/>
    <property type="match status" value="1"/>
</dbReference>
<dbReference type="Pfam" id="PF06325">
    <property type="entry name" value="PrmA"/>
    <property type="match status" value="1"/>
</dbReference>
<dbReference type="PIRSF" id="PIRSF000401">
    <property type="entry name" value="RPL11_MTase"/>
    <property type="match status" value="1"/>
</dbReference>
<dbReference type="SUPFAM" id="SSF53335">
    <property type="entry name" value="S-adenosyl-L-methionine-dependent methyltransferases"/>
    <property type="match status" value="1"/>
</dbReference>
<name>PRMA_BACAN</name>
<reference key="1">
    <citation type="journal article" date="2003" name="Nature">
        <title>The genome sequence of Bacillus anthracis Ames and comparison to closely related bacteria.</title>
        <authorList>
            <person name="Read T.D."/>
            <person name="Peterson S.N."/>
            <person name="Tourasse N.J."/>
            <person name="Baillie L.W."/>
            <person name="Paulsen I.T."/>
            <person name="Nelson K.E."/>
            <person name="Tettelin H."/>
            <person name="Fouts D.E."/>
            <person name="Eisen J.A."/>
            <person name="Gill S.R."/>
            <person name="Holtzapple E.K."/>
            <person name="Okstad O.A."/>
            <person name="Helgason E."/>
            <person name="Rilstone J."/>
            <person name="Wu M."/>
            <person name="Kolonay J.F."/>
            <person name="Beanan M.J."/>
            <person name="Dodson R.J."/>
            <person name="Brinkac L.M."/>
            <person name="Gwinn M.L."/>
            <person name="DeBoy R.T."/>
            <person name="Madpu R."/>
            <person name="Daugherty S.C."/>
            <person name="Durkin A.S."/>
            <person name="Haft D.H."/>
            <person name="Nelson W.C."/>
            <person name="Peterson J.D."/>
            <person name="Pop M."/>
            <person name="Khouri H.M."/>
            <person name="Radune D."/>
            <person name="Benton J.L."/>
            <person name="Mahamoud Y."/>
            <person name="Jiang L."/>
            <person name="Hance I.R."/>
            <person name="Weidman J.F."/>
            <person name="Berry K.J."/>
            <person name="Plaut R.D."/>
            <person name="Wolf A.M."/>
            <person name="Watkins K.L."/>
            <person name="Nierman W.C."/>
            <person name="Hazen A."/>
            <person name="Cline R.T."/>
            <person name="Redmond C."/>
            <person name="Thwaite J.E."/>
            <person name="White O."/>
            <person name="Salzberg S.L."/>
            <person name="Thomason B."/>
            <person name="Friedlander A.M."/>
            <person name="Koehler T.M."/>
            <person name="Hanna P.C."/>
            <person name="Kolstoe A.-B."/>
            <person name="Fraser C.M."/>
        </authorList>
    </citation>
    <scope>NUCLEOTIDE SEQUENCE [LARGE SCALE GENOMIC DNA]</scope>
    <source>
        <strain>Ames / isolate Porton</strain>
    </source>
</reference>
<reference key="2">
    <citation type="journal article" date="2009" name="J. Bacteriol.">
        <title>The complete genome sequence of Bacillus anthracis Ames 'Ancestor'.</title>
        <authorList>
            <person name="Ravel J."/>
            <person name="Jiang L."/>
            <person name="Stanley S.T."/>
            <person name="Wilson M.R."/>
            <person name="Decker R.S."/>
            <person name="Read T.D."/>
            <person name="Worsham P."/>
            <person name="Keim P.S."/>
            <person name="Salzberg S.L."/>
            <person name="Fraser-Liggett C.M."/>
            <person name="Rasko D.A."/>
        </authorList>
    </citation>
    <scope>NUCLEOTIDE SEQUENCE [LARGE SCALE GENOMIC DNA]</scope>
    <source>
        <strain>Ames ancestor</strain>
    </source>
</reference>
<reference key="3">
    <citation type="submission" date="2004-01" db="EMBL/GenBank/DDBJ databases">
        <title>Complete genome sequence of Bacillus anthracis Sterne.</title>
        <authorList>
            <person name="Brettin T.S."/>
            <person name="Bruce D."/>
            <person name="Challacombe J.F."/>
            <person name="Gilna P."/>
            <person name="Han C."/>
            <person name="Hill K."/>
            <person name="Hitchcock P."/>
            <person name="Jackson P."/>
            <person name="Keim P."/>
            <person name="Longmire J."/>
            <person name="Lucas S."/>
            <person name="Okinaka R."/>
            <person name="Richardson P."/>
            <person name="Rubin E."/>
            <person name="Tice H."/>
        </authorList>
    </citation>
    <scope>NUCLEOTIDE SEQUENCE [LARGE SCALE GENOMIC DNA]</scope>
    <source>
        <strain>Sterne</strain>
    </source>
</reference>
<proteinExistence type="inferred from homology"/>
<evidence type="ECO:0000255" key="1">
    <source>
        <dbReference type="HAMAP-Rule" id="MF_00735"/>
    </source>
</evidence>